<protein>
    <recommendedName>
        <fullName evidence="1">Proline--tRNA ligase</fullName>
        <ecNumber evidence="1">6.1.1.15</ecNumber>
    </recommendedName>
    <alternativeName>
        <fullName evidence="1">Prolyl-tRNA synthetase</fullName>
        <shortName evidence="1">ProRS</shortName>
    </alternativeName>
</protein>
<keyword id="KW-0030">Aminoacyl-tRNA synthetase</keyword>
<keyword id="KW-0067">ATP-binding</keyword>
<keyword id="KW-0963">Cytoplasm</keyword>
<keyword id="KW-0436">Ligase</keyword>
<keyword id="KW-0547">Nucleotide-binding</keyword>
<keyword id="KW-0648">Protein biosynthesis</keyword>
<accession>Q2YXK5</accession>
<proteinExistence type="inferred from homology"/>
<gene>
    <name evidence="1" type="primary">proS</name>
    <name type="ordered locus">SAB1125</name>
</gene>
<name>SYP_STAAB</name>
<dbReference type="EC" id="6.1.1.15" evidence="1"/>
<dbReference type="EMBL" id="AJ938182">
    <property type="protein sequence ID" value="CAI80814.1"/>
    <property type="molecule type" value="Genomic_DNA"/>
</dbReference>
<dbReference type="RefSeq" id="WP_000814113.1">
    <property type="nucleotide sequence ID" value="NC_007622.1"/>
</dbReference>
<dbReference type="SMR" id="Q2YXK5"/>
<dbReference type="KEGG" id="sab:SAB1125"/>
<dbReference type="HOGENOM" id="CLU_016739_0_0_9"/>
<dbReference type="GO" id="GO:0005829">
    <property type="term" value="C:cytosol"/>
    <property type="evidence" value="ECO:0007669"/>
    <property type="project" value="TreeGrafter"/>
</dbReference>
<dbReference type="GO" id="GO:0002161">
    <property type="term" value="F:aminoacyl-tRNA deacylase activity"/>
    <property type="evidence" value="ECO:0007669"/>
    <property type="project" value="InterPro"/>
</dbReference>
<dbReference type="GO" id="GO:0005524">
    <property type="term" value="F:ATP binding"/>
    <property type="evidence" value="ECO:0007669"/>
    <property type="project" value="UniProtKB-UniRule"/>
</dbReference>
<dbReference type="GO" id="GO:0140096">
    <property type="term" value="F:catalytic activity, acting on a protein"/>
    <property type="evidence" value="ECO:0007669"/>
    <property type="project" value="UniProtKB-ARBA"/>
</dbReference>
<dbReference type="GO" id="GO:0004827">
    <property type="term" value="F:proline-tRNA ligase activity"/>
    <property type="evidence" value="ECO:0007669"/>
    <property type="project" value="UniProtKB-UniRule"/>
</dbReference>
<dbReference type="GO" id="GO:0016740">
    <property type="term" value="F:transferase activity"/>
    <property type="evidence" value="ECO:0007669"/>
    <property type="project" value="UniProtKB-ARBA"/>
</dbReference>
<dbReference type="GO" id="GO:0006433">
    <property type="term" value="P:prolyl-tRNA aminoacylation"/>
    <property type="evidence" value="ECO:0007669"/>
    <property type="project" value="UniProtKB-UniRule"/>
</dbReference>
<dbReference type="CDD" id="cd04334">
    <property type="entry name" value="ProRS-INS"/>
    <property type="match status" value="1"/>
</dbReference>
<dbReference type="CDD" id="cd00861">
    <property type="entry name" value="ProRS_anticodon_short"/>
    <property type="match status" value="1"/>
</dbReference>
<dbReference type="CDD" id="cd00779">
    <property type="entry name" value="ProRS_core_prok"/>
    <property type="match status" value="1"/>
</dbReference>
<dbReference type="FunFam" id="3.30.930.10:FF:000043">
    <property type="entry name" value="Proline--tRNA ligase"/>
    <property type="match status" value="1"/>
</dbReference>
<dbReference type="FunFam" id="3.40.50.800:FF:000011">
    <property type="entry name" value="Proline--tRNA ligase"/>
    <property type="match status" value="1"/>
</dbReference>
<dbReference type="Gene3D" id="3.40.50.800">
    <property type="entry name" value="Anticodon-binding domain"/>
    <property type="match status" value="1"/>
</dbReference>
<dbReference type="Gene3D" id="3.30.930.10">
    <property type="entry name" value="Bira Bifunctional Protein, Domain 2"/>
    <property type="match status" value="2"/>
</dbReference>
<dbReference type="HAMAP" id="MF_01569">
    <property type="entry name" value="Pro_tRNA_synth_type1"/>
    <property type="match status" value="1"/>
</dbReference>
<dbReference type="InterPro" id="IPR002314">
    <property type="entry name" value="aa-tRNA-synt_IIb"/>
</dbReference>
<dbReference type="InterPro" id="IPR006195">
    <property type="entry name" value="aa-tRNA-synth_II"/>
</dbReference>
<dbReference type="InterPro" id="IPR045864">
    <property type="entry name" value="aa-tRNA-synth_II/BPL/LPL"/>
</dbReference>
<dbReference type="InterPro" id="IPR004154">
    <property type="entry name" value="Anticodon-bd"/>
</dbReference>
<dbReference type="InterPro" id="IPR036621">
    <property type="entry name" value="Anticodon-bd_dom_sf"/>
</dbReference>
<dbReference type="InterPro" id="IPR001387">
    <property type="entry name" value="Cro/C1-type_HTH"/>
</dbReference>
<dbReference type="InterPro" id="IPR002316">
    <property type="entry name" value="Pro-tRNA-ligase_IIa"/>
</dbReference>
<dbReference type="InterPro" id="IPR004500">
    <property type="entry name" value="Pro-tRNA-synth_IIa_bac-type"/>
</dbReference>
<dbReference type="InterPro" id="IPR023717">
    <property type="entry name" value="Pro-tRNA-Synthase_IIa_type1"/>
</dbReference>
<dbReference type="InterPro" id="IPR050062">
    <property type="entry name" value="Pro-tRNA_synthetase"/>
</dbReference>
<dbReference type="InterPro" id="IPR044140">
    <property type="entry name" value="ProRS_anticodon_short"/>
</dbReference>
<dbReference type="InterPro" id="IPR033730">
    <property type="entry name" value="ProRS_core_prok"/>
</dbReference>
<dbReference type="InterPro" id="IPR036754">
    <property type="entry name" value="YbaK/aa-tRNA-synt-asso_dom_sf"/>
</dbReference>
<dbReference type="InterPro" id="IPR007214">
    <property type="entry name" value="YbaK/aa-tRNA-synth-assoc-dom"/>
</dbReference>
<dbReference type="NCBIfam" id="NF006625">
    <property type="entry name" value="PRK09194.1"/>
    <property type="match status" value="1"/>
</dbReference>
<dbReference type="NCBIfam" id="TIGR00409">
    <property type="entry name" value="proS_fam_II"/>
    <property type="match status" value="1"/>
</dbReference>
<dbReference type="PANTHER" id="PTHR42753">
    <property type="entry name" value="MITOCHONDRIAL RIBOSOME PROTEIN L39/PROLYL-TRNA LIGASE FAMILY MEMBER"/>
    <property type="match status" value="1"/>
</dbReference>
<dbReference type="PANTHER" id="PTHR42753:SF2">
    <property type="entry name" value="PROLINE--TRNA LIGASE"/>
    <property type="match status" value="1"/>
</dbReference>
<dbReference type="Pfam" id="PF03129">
    <property type="entry name" value="HGTP_anticodon"/>
    <property type="match status" value="1"/>
</dbReference>
<dbReference type="Pfam" id="PF00587">
    <property type="entry name" value="tRNA-synt_2b"/>
    <property type="match status" value="1"/>
</dbReference>
<dbReference type="Pfam" id="PF04073">
    <property type="entry name" value="tRNA_edit"/>
    <property type="match status" value="1"/>
</dbReference>
<dbReference type="PRINTS" id="PR01046">
    <property type="entry name" value="TRNASYNTHPRO"/>
</dbReference>
<dbReference type="SUPFAM" id="SSF52954">
    <property type="entry name" value="Class II aaRS ABD-related"/>
    <property type="match status" value="1"/>
</dbReference>
<dbReference type="SUPFAM" id="SSF55681">
    <property type="entry name" value="Class II aaRS and biotin synthetases"/>
    <property type="match status" value="1"/>
</dbReference>
<dbReference type="SUPFAM" id="SSF55826">
    <property type="entry name" value="YbaK/ProRS associated domain"/>
    <property type="match status" value="1"/>
</dbReference>
<dbReference type="PROSITE" id="PS50862">
    <property type="entry name" value="AA_TRNA_LIGASE_II"/>
    <property type="match status" value="1"/>
</dbReference>
<sequence>MKQSKVFIPTMRDVPSEAEAQSHRLLLKSGLIKQSTSGIYSYLPLATRVLNNITAIVRQEMERIDSVEILMPALQQAELWEESGRWGAYGTELMRLQDRHGRQFALGPTHEELVTSIVRNELKSYKQLPMTLFQIQSKFRDEKRPRFGLLRGREFIMKDAYSFHADEASLDQTYQDMYQAYSRIFERVGINARPVVADSGAIGGSHTHEFMALSAIGEDTIVYSKESDYAANIEKAEVVYEPNHKHTTVQSLEKIETPNVKTAQELADFLGRPVDEIVKTMIFKVDGEYIMVLVRGHHEINDIKLKSYFGTDNIELATQDEIVNLVGANPGSLGPVIDKEIKIYADNFVQDLNNLVVGANEDGYHLINVNVGRDFNVDEYGDFRFILEGEKLSDSSGVAHFAEGIEVGQVFKLGTKYSESMNATFLDNQGKAQPLIMGCYGIGISRTLSAIVEQNHDDNGIVWPKSVTPFDLHLISINPKKDDQRELADALYAEFNTKFDVLYDDRQERAGVKFNDADLIGLPLRIVVGKRASEGIVEVKERLTGDSEEVHIADLMTVITNKYDNLK</sequence>
<evidence type="ECO:0000255" key="1">
    <source>
        <dbReference type="HAMAP-Rule" id="MF_01569"/>
    </source>
</evidence>
<feature type="chain" id="PRO_0000248768" description="Proline--tRNA ligase">
    <location>
        <begin position="1"/>
        <end position="567"/>
    </location>
</feature>
<organism>
    <name type="scientific">Staphylococcus aureus (strain bovine RF122 / ET3-1)</name>
    <dbReference type="NCBI Taxonomy" id="273036"/>
    <lineage>
        <taxon>Bacteria</taxon>
        <taxon>Bacillati</taxon>
        <taxon>Bacillota</taxon>
        <taxon>Bacilli</taxon>
        <taxon>Bacillales</taxon>
        <taxon>Staphylococcaceae</taxon>
        <taxon>Staphylococcus</taxon>
    </lineage>
</organism>
<comment type="function">
    <text evidence="1">Catalyzes the attachment of proline to tRNA(Pro) in a two-step reaction: proline is first activated by ATP to form Pro-AMP and then transferred to the acceptor end of tRNA(Pro). As ProRS can inadvertently accommodate and process non-cognate amino acids such as alanine and cysteine, to avoid such errors it has two additional distinct editing activities against alanine. One activity is designated as 'pretransfer' editing and involves the tRNA(Pro)-independent hydrolysis of activated Ala-AMP. The other activity is designated 'posttransfer' editing and involves deacylation of mischarged Ala-tRNA(Pro). The misacylated Cys-tRNA(Pro) is not edited by ProRS.</text>
</comment>
<comment type="catalytic activity">
    <reaction evidence="1">
        <text>tRNA(Pro) + L-proline + ATP = L-prolyl-tRNA(Pro) + AMP + diphosphate</text>
        <dbReference type="Rhea" id="RHEA:14305"/>
        <dbReference type="Rhea" id="RHEA-COMP:9700"/>
        <dbReference type="Rhea" id="RHEA-COMP:9702"/>
        <dbReference type="ChEBI" id="CHEBI:30616"/>
        <dbReference type="ChEBI" id="CHEBI:33019"/>
        <dbReference type="ChEBI" id="CHEBI:60039"/>
        <dbReference type="ChEBI" id="CHEBI:78442"/>
        <dbReference type="ChEBI" id="CHEBI:78532"/>
        <dbReference type="ChEBI" id="CHEBI:456215"/>
        <dbReference type="EC" id="6.1.1.15"/>
    </reaction>
</comment>
<comment type="subunit">
    <text evidence="1">Homodimer.</text>
</comment>
<comment type="subcellular location">
    <subcellularLocation>
        <location evidence="1">Cytoplasm</location>
    </subcellularLocation>
</comment>
<comment type="domain">
    <text evidence="1">Consists of three domains: the N-terminal catalytic domain, the editing domain and the C-terminal anticodon-binding domain.</text>
</comment>
<comment type="similarity">
    <text evidence="1">Belongs to the class-II aminoacyl-tRNA synthetase family. ProS type 1 subfamily.</text>
</comment>
<reference key="1">
    <citation type="journal article" date="2007" name="PLoS ONE">
        <title>Molecular correlates of host specialization in Staphylococcus aureus.</title>
        <authorList>
            <person name="Herron-Olson L."/>
            <person name="Fitzgerald J.R."/>
            <person name="Musser J.M."/>
            <person name="Kapur V."/>
        </authorList>
    </citation>
    <scope>NUCLEOTIDE SEQUENCE [LARGE SCALE GENOMIC DNA]</scope>
    <source>
        <strain>bovine RF122 / ET3-1</strain>
    </source>
</reference>